<protein>
    <recommendedName>
        <fullName evidence="1">Leucine--tRNA ligase</fullName>
        <ecNumber evidence="1">6.1.1.4</ecNumber>
    </recommendedName>
    <alternativeName>
        <fullName evidence="1">Leucyl-tRNA synthetase</fullName>
        <shortName evidence="1">LeuRS</shortName>
    </alternativeName>
</protein>
<dbReference type="EC" id="6.1.1.4" evidence="1"/>
<dbReference type="EMBL" id="CP000806">
    <property type="protein sequence ID" value="ACB53585.1"/>
    <property type="molecule type" value="Genomic_DNA"/>
</dbReference>
<dbReference type="RefSeq" id="WP_009543691.1">
    <property type="nucleotide sequence ID" value="NC_010546.1"/>
</dbReference>
<dbReference type="SMR" id="B1WSK6"/>
<dbReference type="STRING" id="43989.cce_4237"/>
<dbReference type="KEGG" id="cyt:cce_4237"/>
<dbReference type="eggNOG" id="COG0495">
    <property type="taxonomic scope" value="Bacteria"/>
</dbReference>
<dbReference type="HOGENOM" id="CLU_004427_0_0_3"/>
<dbReference type="OrthoDB" id="9810365at2"/>
<dbReference type="Proteomes" id="UP000001203">
    <property type="component" value="Chromosome circular"/>
</dbReference>
<dbReference type="GO" id="GO:0005829">
    <property type="term" value="C:cytosol"/>
    <property type="evidence" value="ECO:0007669"/>
    <property type="project" value="TreeGrafter"/>
</dbReference>
<dbReference type="GO" id="GO:0002161">
    <property type="term" value="F:aminoacyl-tRNA deacylase activity"/>
    <property type="evidence" value="ECO:0007669"/>
    <property type="project" value="InterPro"/>
</dbReference>
<dbReference type="GO" id="GO:0005524">
    <property type="term" value="F:ATP binding"/>
    <property type="evidence" value="ECO:0007669"/>
    <property type="project" value="UniProtKB-UniRule"/>
</dbReference>
<dbReference type="GO" id="GO:0004823">
    <property type="term" value="F:leucine-tRNA ligase activity"/>
    <property type="evidence" value="ECO:0007669"/>
    <property type="project" value="UniProtKB-UniRule"/>
</dbReference>
<dbReference type="GO" id="GO:0006429">
    <property type="term" value="P:leucyl-tRNA aminoacylation"/>
    <property type="evidence" value="ECO:0007669"/>
    <property type="project" value="UniProtKB-UniRule"/>
</dbReference>
<dbReference type="CDD" id="cd07958">
    <property type="entry name" value="Anticodon_Ia_Leu_BEm"/>
    <property type="match status" value="1"/>
</dbReference>
<dbReference type="CDD" id="cd00812">
    <property type="entry name" value="LeuRS_core"/>
    <property type="match status" value="1"/>
</dbReference>
<dbReference type="FunFam" id="3.40.50.620:FF:000003">
    <property type="entry name" value="Leucine--tRNA ligase"/>
    <property type="match status" value="1"/>
</dbReference>
<dbReference type="FunFam" id="1.10.730.10:FF:000011">
    <property type="entry name" value="Leucine--tRNA ligase chloroplastic/mitochondrial"/>
    <property type="match status" value="1"/>
</dbReference>
<dbReference type="FunFam" id="3.40.50.620:FF:000100">
    <property type="entry name" value="probable leucine--tRNA ligase, mitochondrial"/>
    <property type="match status" value="1"/>
</dbReference>
<dbReference type="Gene3D" id="3.40.50.620">
    <property type="entry name" value="HUPs"/>
    <property type="match status" value="2"/>
</dbReference>
<dbReference type="Gene3D" id="1.10.730.10">
    <property type="entry name" value="Isoleucyl-tRNA Synthetase, Domain 1"/>
    <property type="match status" value="1"/>
</dbReference>
<dbReference type="HAMAP" id="MF_00049_B">
    <property type="entry name" value="Leu_tRNA_synth_B"/>
    <property type="match status" value="1"/>
</dbReference>
<dbReference type="InterPro" id="IPR001412">
    <property type="entry name" value="aa-tRNA-synth_I_CS"/>
</dbReference>
<dbReference type="InterPro" id="IPR002300">
    <property type="entry name" value="aa-tRNA-synth_Ia"/>
</dbReference>
<dbReference type="InterPro" id="IPR002302">
    <property type="entry name" value="Leu-tRNA-ligase"/>
</dbReference>
<dbReference type="InterPro" id="IPR025709">
    <property type="entry name" value="Leu_tRNA-synth_edit"/>
</dbReference>
<dbReference type="InterPro" id="IPR013155">
    <property type="entry name" value="M/V/L/I-tRNA-synth_anticd-bd"/>
</dbReference>
<dbReference type="InterPro" id="IPR015413">
    <property type="entry name" value="Methionyl/Leucyl_tRNA_Synth"/>
</dbReference>
<dbReference type="InterPro" id="IPR014729">
    <property type="entry name" value="Rossmann-like_a/b/a_fold"/>
</dbReference>
<dbReference type="InterPro" id="IPR009080">
    <property type="entry name" value="tRNAsynth_Ia_anticodon-bd"/>
</dbReference>
<dbReference type="InterPro" id="IPR009008">
    <property type="entry name" value="Val/Leu/Ile-tRNA-synth_edit"/>
</dbReference>
<dbReference type="NCBIfam" id="TIGR00396">
    <property type="entry name" value="leuS_bact"/>
    <property type="match status" value="1"/>
</dbReference>
<dbReference type="PANTHER" id="PTHR43740:SF2">
    <property type="entry name" value="LEUCINE--TRNA LIGASE, MITOCHONDRIAL"/>
    <property type="match status" value="1"/>
</dbReference>
<dbReference type="PANTHER" id="PTHR43740">
    <property type="entry name" value="LEUCYL-TRNA SYNTHETASE"/>
    <property type="match status" value="1"/>
</dbReference>
<dbReference type="Pfam" id="PF08264">
    <property type="entry name" value="Anticodon_1"/>
    <property type="match status" value="1"/>
</dbReference>
<dbReference type="Pfam" id="PF00133">
    <property type="entry name" value="tRNA-synt_1"/>
    <property type="match status" value="2"/>
</dbReference>
<dbReference type="Pfam" id="PF13603">
    <property type="entry name" value="tRNA-synt_1_2"/>
    <property type="match status" value="1"/>
</dbReference>
<dbReference type="Pfam" id="PF09334">
    <property type="entry name" value="tRNA-synt_1g"/>
    <property type="match status" value="1"/>
</dbReference>
<dbReference type="PRINTS" id="PR00985">
    <property type="entry name" value="TRNASYNTHLEU"/>
</dbReference>
<dbReference type="SUPFAM" id="SSF47323">
    <property type="entry name" value="Anticodon-binding domain of a subclass of class I aminoacyl-tRNA synthetases"/>
    <property type="match status" value="1"/>
</dbReference>
<dbReference type="SUPFAM" id="SSF52374">
    <property type="entry name" value="Nucleotidylyl transferase"/>
    <property type="match status" value="1"/>
</dbReference>
<dbReference type="SUPFAM" id="SSF50677">
    <property type="entry name" value="ValRS/IleRS/LeuRS editing domain"/>
    <property type="match status" value="1"/>
</dbReference>
<dbReference type="PROSITE" id="PS00178">
    <property type="entry name" value="AA_TRNA_LIGASE_I"/>
    <property type="match status" value="1"/>
</dbReference>
<sequence length="853" mass="97000">MESQYNAAEIEQKWQQDWVNQGLDKTPENSDKPKFYALSMFPYPSGNLHMGHVRNYVITDVIARLKRLQGYRVLHPMGWDAFGLPAENAAIDRNIPPADWTYKNIAQMKQQLQTLGLSIDWDREVATCSPDYYKWTQWLFLQFYQAGLAYQKEAAVNWDPIDQTVLANEQVDSEGYSWRSGAKVERKLLRQWFFKITDYAEQLLTDLDKLTGWPDRVKLMQENWIGKSVGAYLEFPVKGSEEKIAVFTTRPDTVYGVTYVVLAPEHPLTPKVTTEGQKEAVEAFIEEVSNESEIERTAEDKPKRGILTGGTAVNPFNGEEIPILIADYVLYEYGTGAVMGVPAHDTRDFKFATEKELPIKVVIVPENSEDNNPTLTEAYTEPGIMVNSGEFNGMQSTEGKTAIINYAEKQGYGKARIQYRLRDWLISRQRYWGCPIPVVHCPSCGTVAVPDADLPVKLPENVEFTGRGASPLAKMEDWINVPCPSCGEPAKRETDTMDTFIDSSWYYLRYTDAMNDQEAFKLEKANDWMNVDQYVGGIEHAILHLLYSRFFTKVLRDRGLVNVDEPFKRLLTQGMVQAMAYKNPKTGKYIPVDKVNPESPKDPDTGDDLEVFYEKMSKSKYNGVDPQKVLGKYGADTARMFILFKAPPEKDLEWDDADVEGQFRFLNRVWRLVNGYEKKQGEVISNKELSKEEKDLRRAIHTAIKEISEDLEGDYQFNTAVSELMKLSNALNDAKCINSEVYQEGIETLLILLAPFAPHIAEELWHNLGHETSIHLETWPQVDPDALVVDEITLVIQIMGKTRGTIQVPANSSKEELEKLARESDIGQRNLDGKEVKKVIVVPGKLVNFVVPK</sequence>
<organism>
    <name type="scientific">Crocosphaera subtropica (strain ATCC 51142 / BH68)</name>
    <name type="common">Cyanothece sp. (strain ATCC 51142)</name>
    <dbReference type="NCBI Taxonomy" id="43989"/>
    <lineage>
        <taxon>Bacteria</taxon>
        <taxon>Bacillati</taxon>
        <taxon>Cyanobacteriota</taxon>
        <taxon>Cyanophyceae</taxon>
        <taxon>Oscillatoriophycideae</taxon>
        <taxon>Chroococcales</taxon>
        <taxon>Aphanothecaceae</taxon>
        <taxon>Crocosphaera</taxon>
        <taxon>Crocosphaera subtropica</taxon>
    </lineage>
</organism>
<name>SYL_CROS5</name>
<accession>B1WSK6</accession>
<proteinExistence type="inferred from homology"/>
<reference key="1">
    <citation type="journal article" date="2008" name="Proc. Natl. Acad. Sci. U.S.A.">
        <title>The genome of Cyanothece 51142, a unicellular diazotrophic cyanobacterium important in the marine nitrogen cycle.</title>
        <authorList>
            <person name="Welsh E.A."/>
            <person name="Liberton M."/>
            <person name="Stoeckel J."/>
            <person name="Loh T."/>
            <person name="Elvitigala T."/>
            <person name="Wang C."/>
            <person name="Wollam A."/>
            <person name="Fulton R.S."/>
            <person name="Clifton S.W."/>
            <person name="Jacobs J.M."/>
            <person name="Aurora R."/>
            <person name="Ghosh B.K."/>
            <person name="Sherman L.A."/>
            <person name="Smith R.D."/>
            <person name="Wilson R.K."/>
            <person name="Pakrasi H.B."/>
        </authorList>
    </citation>
    <scope>NUCLEOTIDE SEQUENCE [LARGE SCALE GENOMIC DNA]</scope>
    <source>
        <strain>ATCC 51142 / BH68</strain>
    </source>
</reference>
<comment type="catalytic activity">
    <reaction evidence="1">
        <text>tRNA(Leu) + L-leucine + ATP = L-leucyl-tRNA(Leu) + AMP + diphosphate</text>
        <dbReference type="Rhea" id="RHEA:11688"/>
        <dbReference type="Rhea" id="RHEA-COMP:9613"/>
        <dbReference type="Rhea" id="RHEA-COMP:9622"/>
        <dbReference type="ChEBI" id="CHEBI:30616"/>
        <dbReference type="ChEBI" id="CHEBI:33019"/>
        <dbReference type="ChEBI" id="CHEBI:57427"/>
        <dbReference type="ChEBI" id="CHEBI:78442"/>
        <dbReference type="ChEBI" id="CHEBI:78494"/>
        <dbReference type="ChEBI" id="CHEBI:456215"/>
        <dbReference type="EC" id="6.1.1.4"/>
    </reaction>
</comment>
<comment type="subcellular location">
    <subcellularLocation>
        <location evidence="1">Cytoplasm</location>
    </subcellularLocation>
</comment>
<comment type="similarity">
    <text evidence="1">Belongs to the class-I aminoacyl-tRNA synthetase family.</text>
</comment>
<evidence type="ECO:0000255" key="1">
    <source>
        <dbReference type="HAMAP-Rule" id="MF_00049"/>
    </source>
</evidence>
<keyword id="KW-0030">Aminoacyl-tRNA synthetase</keyword>
<keyword id="KW-0067">ATP-binding</keyword>
<keyword id="KW-0963">Cytoplasm</keyword>
<keyword id="KW-0436">Ligase</keyword>
<keyword id="KW-0547">Nucleotide-binding</keyword>
<keyword id="KW-0648">Protein biosynthesis</keyword>
<keyword id="KW-1185">Reference proteome</keyword>
<feature type="chain" id="PRO_1000091311" description="Leucine--tRNA ligase">
    <location>
        <begin position="1"/>
        <end position="853"/>
    </location>
</feature>
<feature type="short sequence motif" description="'HIGH' region">
    <location>
        <begin position="42"/>
        <end position="52"/>
    </location>
</feature>
<feature type="short sequence motif" description="'KMSKS' region">
    <location>
        <begin position="615"/>
        <end position="619"/>
    </location>
</feature>
<feature type="binding site" evidence="1">
    <location>
        <position position="618"/>
    </location>
    <ligand>
        <name>ATP</name>
        <dbReference type="ChEBI" id="CHEBI:30616"/>
    </ligand>
</feature>
<gene>
    <name evidence="1" type="primary">leuS</name>
    <name type="ordered locus">cce_4237</name>
</gene>